<sequence>MPTIRPDEISTIIKQQIEQYNQEMQISNVGTVLQVGDGIARIYGLEKVMASELLEFEDGTVGIALNLEEDNVGAVLIGSGRNIQEGSIVKATGRIASIPVGEALLGRVVDPLCNPIDGKGPIHCTETRLIESPAPGIVDRRSVYEPLQTGITAIDALIPIGRGQRELIIGDRQTGKTTLAVDTILNQKGQDVICIYVAIGQKQSNIAQVVNILSERGAMDYSIVVAAGADSPAPLQWLAPYCGATIAEYFMYQGKHTLVVYDDLSKQAVAYRQMSLLLRRPPGREAYPGDVFYLHSRLLERAAKLNSRLGEGSMTALPIVETQANDVSAYIPTNVISITDGQIFLESDLFNAGIRPAINVGISVSRVGSAAQTKAMKKVAGSIKVELAQYRDLEAFAQFASDLDEATQKQLARGQRLQEILKQPQYSPLSLDQQVAIIYAGTRGYLDDIPVEKVSSFKQGLLSYLGTAHPKYGEIVLSTKQLTDEAEEILKTAIAEFKQSFLAKAA</sequence>
<evidence type="ECO:0000250" key="1"/>
<evidence type="ECO:0000255" key="2">
    <source>
        <dbReference type="HAMAP-Rule" id="MF_01346"/>
    </source>
</evidence>
<accession>Q2JSW1</accession>
<comment type="function">
    <text evidence="2">Produces ATP from ADP in the presence of a proton gradient across the membrane. The alpha chain is a regulatory subunit.</text>
</comment>
<comment type="catalytic activity">
    <reaction evidence="2">
        <text>ATP + H2O + 4 H(+)(in) = ADP + phosphate + 5 H(+)(out)</text>
        <dbReference type="Rhea" id="RHEA:57720"/>
        <dbReference type="ChEBI" id="CHEBI:15377"/>
        <dbReference type="ChEBI" id="CHEBI:15378"/>
        <dbReference type="ChEBI" id="CHEBI:30616"/>
        <dbReference type="ChEBI" id="CHEBI:43474"/>
        <dbReference type="ChEBI" id="CHEBI:456216"/>
        <dbReference type="EC" id="7.1.2.2"/>
    </reaction>
</comment>
<comment type="subunit">
    <text evidence="1">F-type ATPases have 2 components, CF(1) - the catalytic core - and CF(0) - the membrane proton channel. CF(1) has five subunits: alpha(3), beta(3), gamma(1), delta(1), epsilon(1). CF(0) has four main subunits: a(1), b(1), b'(1) and c(9-12) (By similarity).</text>
</comment>
<comment type="subcellular location">
    <subcellularLocation>
        <location evidence="2">Cellular thylakoid membrane</location>
        <topology evidence="2">Peripheral membrane protein</topology>
    </subcellularLocation>
</comment>
<comment type="similarity">
    <text evidence="2">Belongs to the ATPase alpha/beta chains family.</text>
</comment>
<protein>
    <recommendedName>
        <fullName evidence="2">ATP synthase subunit alpha</fullName>
        <ecNumber evidence="2">7.1.2.2</ecNumber>
    </recommendedName>
    <alternativeName>
        <fullName evidence="2">ATP synthase F1 sector subunit alpha</fullName>
    </alternativeName>
    <alternativeName>
        <fullName evidence="2">F-ATPase subunit alpha</fullName>
    </alternativeName>
</protein>
<feature type="chain" id="PRO_0000238380" description="ATP synthase subunit alpha">
    <location>
        <begin position="1"/>
        <end position="506"/>
    </location>
</feature>
<feature type="binding site" evidence="2">
    <location>
        <begin position="170"/>
        <end position="177"/>
    </location>
    <ligand>
        <name>ATP</name>
        <dbReference type="ChEBI" id="CHEBI:30616"/>
    </ligand>
</feature>
<feature type="site" description="Required for activity" evidence="2">
    <location>
        <position position="363"/>
    </location>
</feature>
<dbReference type="EC" id="7.1.2.2" evidence="2"/>
<dbReference type="EMBL" id="CP000239">
    <property type="protein sequence ID" value="ABD00253.1"/>
    <property type="molecule type" value="Genomic_DNA"/>
</dbReference>
<dbReference type="RefSeq" id="WP_011430927.1">
    <property type="nucleotide sequence ID" value="NC_007775.1"/>
</dbReference>
<dbReference type="SMR" id="Q2JSW1"/>
<dbReference type="STRING" id="321327.CYA_2113"/>
<dbReference type="KEGG" id="cya:CYA_2113"/>
<dbReference type="eggNOG" id="COG0056">
    <property type="taxonomic scope" value="Bacteria"/>
</dbReference>
<dbReference type="HOGENOM" id="CLU_010091_2_1_3"/>
<dbReference type="OrthoDB" id="9803053at2"/>
<dbReference type="Proteomes" id="UP000008818">
    <property type="component" value="Chromosome"/>
</dbReference>
<dbReference type="GO" id="GO:0031676">
    <property type="term" value="C:plasma membrane-derived thylakoid membrane"/>
    <property type="evidence" value="ECO:0007669"/>
    <property type="project" value="UniProtKB-SubCell"/>
</dbReference>
<dbReference type="GO" id="GO:0045259">
    <property type="term" value="C:proton-transporting ATP synthase complex"/>
    <property type="evidence" value="ECO:0007669"/>
    <property type="project" value="UniProtKB-KW"/>
</dbReference>
<dbReference type="GO" id="GO:0043531">
    <property type="term" value="F:ADP binding"/>
    <property type="evidence" value="ECO:0007669"/>
    <property type="project" value="TreeGrafter"/>
</dbReference>
<dbReference type="GO" id="GO:0005524">
    <property type="term" value="F:ATP binding"/>
    <property type="evidence" value="ECO:0007669"/>
    <property type="project" value="UniProtKB-UniRule"/>
</dbReference>
<dbReference type="GO" id="GO:0046933">
    <property type="term" value="F:proton-transporting ATP synthase activity, rotational mechanism"/>
    <property type="evidence" value="ECO:0007669"/>
    <property type="project" value="UniProtKB-UniRule"/>
</dbReference>
<dbReference type="CDD" id="cd18113">
    <property type="entry name" value="ATP-synt_F1_alpha_C"/>
    <property type="match status" value="1"/>
</dbReference>
<dbReference type="CDD" id="cd18116">
    <property type="entry name" value="ATP-synt_F1_alpha_N"/>
    <property type="match status" value="1"/>
</dbReference>
<dbReference type="CDD" id="cd01132">
    <property type="entry name" value="F1-ATPase_alpha_CD"/>
    <property type="match status" value="1"/>
</dbReference>
<dbReference type="FunFam" id="1.20.150.20:FF:000001">
    <property type="entry name" value="ATP synthase subunit alpha"/>
    <property type="match status" value="1"/>
</dbReference>
<dbReference type="FunFam" id="2.40.30.20:FF:000001">
    <property type="entry name" value="ATP synthase subunit alpha"/>
    <property type="match status" value="1"/>
</dbReference>
<dbReference type="FunFam" id="3.40.50.300:FF:000002">
    <property type="entry name" value="ATP synthase subunit alpha"/>
    <property type="match status" value="1"/>
</dbReference>
<dbReference type="Gene3D" id="2.40.30.20">
    <property type="match status" value="1"/>
</dbReference>
<dbReference type="Gene3D" id="1.20.150.20">
    <property type="entry name" value="ATP synthase alpha/beta chain, C-terminal domain"/>
    <property type="match status" value="1"/>
</dbReference>
<dbReference type="Gene3D" id="3.40.50.300">
    <property type="entry name" value="P-loop containing nucleotide triphosphate hydrolases"/>
    <property type="match status" value="1"/>
</dbReference>
<dbReference type="HAMAP" id="MF_01346">
    <property type="entry name" value="ATP_synth_alpha_bact"/>
    <property type="match status" value="1"/>
</dbReference>
<dbReference type="InterPro" id="IPR023366">
    <property type="entry name" value="ATP_synth_asu-like_sf"/>
</dbReference>
<dbReference type="InterPro" id="IPR000793">
    <property type="entry name" value="ATP_synth_asu_C"/>
</dbReference>
<dbReference type="InterPro" id="IPR038376">
    <property type="entry name" value="ATP_synth_asu_C_sf"/>
</dbReference>
<dbReference type="InterPro" id="IPR033732">
    <property type="entry name" value="ATP_synth_F1_a_nt-bd_dom"/>
</dbReference>
<dbReference type="InterPro" id="IPR005294">
    <property type="entry name" value="ATP_synth_F1_asu"/>
</dbReference>
<dbReference type="InterPro" id="IPR020003">
    <property type="entry name" value="ATPase_a/bsu_AS"/>
</dbReference>
<dbReference type="InterPro" id="IPR004100">
    <property type="entry name" value="ATPase_F1/V1/A1_a/bsu_N"/>
</dbReference>
<dbReference type="InterPro" id="IPR036121">
    <property type="entry name" value="ATPase_F1/V1/A1_a/bsu_N_sf"/>
</dbReference>
<dbReference type="InterPro" id="IPR000194">
    <property type="entry name" value="ATPase_F1/V1/A1_a/bsu_nucl-bd"/>
</dbReference>
<dbReference type="InterPro" id="IPR027417">
    <property type="entry name" value="P-loop_NTPase"/>
</dbReference>
<dbReference type="NCBIfam" id="TIGR00962">
    <property type="entry name" value="atpA"/>
    <property type="match status" value="1"/>
</dbReference>
<dbReference type="NCBIfam" id="NF009884">
    <property type="entry name" value="PRK13343.1"/>
    <property type="match status" value="1"/>
</dbReference>
<dbReference type="PANTHER" id="PTHR48082">
    <property type="entry name" value="ATP SYNTHASE SUBUNIT ALPHA, MITOCHONDRIAL"/>
    <property type="match status" value="1"/>
</dbReference>
<dbReference type="PANTHER" id="PTHR48082:SF2">
    <property type="entry name" value="ATP SYNTHASE SUBUNIT ALPHA, MITOCHONDRIAL"/>
    <property type="match status" value="1"/>
</dbReference>
<dbReference type="Pfam" id="PF00006">
    <property type="entry name" value="ATP-synt_ab"/>
    <property type="match status" value="1"/>
</dbReference>
<dbReference type="Pfam" id="PF00306">
    <property type="entry name" value="ATP-synt_ab_C"/>
    <property type="match status" value="1"/>
</dbReference>
<dbReference type="Pfam" id="PF02874">
    <property type="entry name" value="ATP-synt_ab_N"/>
    <property type="match status" value="1"/>
</dbReference>
<dbReference type="PIRSF" id="PIRSF039088">
    <property type="entry name" value="F_ATPase_subunit_alpha"/>
    <property type="match status" value="1"/>
</dbReference>
<dbReference type="SUPFAM" id="SSF47917">
    <property type="entry name" value="C-terminal domain of alpha and beta subunits of F1 ATP synthase"/>
    <property type="match status" value="1"/>
</dbReference>
<dbReference type="SUPFAM" id="SSF50615">
    <property type="entry name" value="N-terminal domain of alpha and beta subunits of F1 ATP synthase"/>
    <property type="match status" value="1"/>
</dbReference>
<dbReference type="SUPFAM" id="SSF52540">
    <property type="entry name" value="P-loop containing nucleoside triphosphate hydrolases"/>
    <property type="match status" value="1"/>
</dbReference>
<dbReference type="PROSITE" id="PS00152">
    <property type="entry name" value="ATPASE_ALPHA_BETA"/>
    <property type="match status" value="1"/>
</dbReference>
<gene>
    <name evidence="2" type="primary">atpA</name>
    <name type="ordered locus">CYA_2113</name>
</gene>
<name>ATPA_SYNJA</name>
<proteinExistence type="inferred from homology"/>
<reference key="1">
    <citation type="journal article" date="2007" name="ISME J.">
        <title>Population level functional diversity in a microbial community revealed by comparative genomic and metagenomic analyses.</title>
        <authorList>
            <person name="Bhaya D."/>
            <person name="Grossman A.R."/>
            <person name="Steunou A.-S."/>
            <person name="Khuri N."/>
            <person name="Cohan F.M."/>
            <person name="Hamamura N."/>
            <person name="Melendrez M.C."/>
            <person name="Bateson M.M."/>
            <person name="Ward D.M."/>
            <person name="Heidelberg J.F."/>
        </authorList>
    </citation>
    <scope>NUCLEOTIDE SEQUENCE [LARGE SCALE GENOMIC DNA]</scope>
    <source>
        <strain>JA-3-3Ab</strain>
    </source>
</reference>
<organism>
    <name type="scientific">Synechococcus sp. (strain JA-3-3Ab)</name>
    <name type="common">Cyanobacteria bacterium Yellowstone A-Prime</name>
    <dbReference type="NCBI Taxonomy" id="321327"/>
    <lineage>
        <taxon>Bacteria</taxon>
        <taxon>Bacillati</taxon>
        <taxon>Cyanobacteriota</taxon>
        <taxon>Cyanophyceae</taxon>
        <taxon>Synechococcales</taxon>
        <taxon>Synechococcaceae</taxon>
        <taxon>Synechococcus</taxon>
    </lineage>
</organism>
<keyword id="KW-0066">ATP synthesis</keyword>
<keyword id="KW-0067">ATP-binding</keyword>
<keyword id="KW-0139">CF(1)</keyword>
<keyword id="KW-0375">Hydrogen ion transport</keyword>
<keyword id="KW-0406">Ion transport</keyword>
<keyword id="KW-0472">Membrane</keyword>
<keyword id="KW-0547">Nucleotide-binding</keyword>
<keyword id="KW-0793">Thylakoid</keyword>
<keyword id="KW-1278">Translocase</keyword>
<keyword id="KW-0813">Transport</keyword>